<gene>
    <name evidence="1" type="primary">arc</name>
    <name type="ordered locus">FRAAL2869</name>
</gene>
<organism>
    <name type="scientific">Frankia alni (strain DSM 45986 / CECT 9034 / ACN14a)</name>
    <dbReference type="NCBI Taxonomy" id="326424"/>
    <lineage>
        <taxon>Bacteria</taxon>
        <taxon>Bacillati</taxon>
        <taxon>Actinomycetota</taxon>
        <taxon>Actinomycetes</taxon>
        <taxon>Frankiales</taxon>
        <taxon>Frankiaceae</taxon>
        <taxon>Frankia</taxon>
    </lineage>
</organism>
<dbReference type="EMBL" id="CT573213">
    <property type="protein sequence ID" value="CAJ61513.1"/>
    <property type="status" value="ALT_INIT"/>
    <property type="molecule type" value="Genomic_DNA"/>
</dbReference>
<dbReference type="RefSeq" id="WP_041939236.1">
    <property type="nucleotide sequence ID" value="NC_008278.1"/>
</dbReference>
<dbReference type="SMR" id="Q0RLU1"/>
<dbReference type="STRING" id="326424.FRAAL2869"/>
<dbReference type="KEGG" id="fal:FRAAL2869"/>
<dbReference type="eggNOG" id="COG1222">
    <property type="taxonomic scope" value="Bacteria"/>
</dbReference>
<dbReference type="HOGENOM" id="CLU_036054_0_0_11"/>
<dbReference type="OrthoDB" id="9809379at2"/>
<dbReference type="UniPathway" id="UPA00997"/>
<dbReference type="Proteomes" id="UP000000657">
    <property type="component" value="Chromosome"/>
</dbReference>
<dbReference type="GO" id="GO:0000502">
    <property type="term" value="C:proteasome complex"/>
    <property type="evidence" value="ECO:0007669"/>
    <property type="project" value="UniProtKB-KW"/>
</dbReference>
<dbReference type="GO" id="GO:0005524">
    <property type="term" value="F:ATP binding"/>
    <property type="evidence" value="ECO:0007669"/>
    <property type="project" value="UniProtKB-UniRule"/>
</dbReference>
<dbReference type="GO" id="GO:0016887">
    <property type="term" value="F:ATP hydrolysis activity"/>
    <property type="evidence" value="ECO:0007669"/>
    <property type="project" value="UniProtKB-UniRule"/>
</dbReference>
<dbReference type="GO" id="GO:0019941">
    <property type="term" value="P:modification-dependent protein catabolic process"/>
    <property type="evidence" value="ECO:0007669"/>
    <property type="project" value="InterPro"/>
</dbReference>
<dbReference type="GO" id="GO:0010498">
    <property type="term" value="P:proteasomal protein catabolic process"/>
    <property type="evidence" value="ECO:0007669"/>
    <property type="project" value="InterPro"/>
</dbReference>
<dbReference type="FunFam" id="3.40.50.300:FF:001025">
    <property type="entry name" value="ATPase family, AAA domain-containing 2B"/>
    <property type="match status" value="1"/>
</dbReference>
<dbReference type="Gene3D" id="1.10.8.60">
    <property type="match status" value="1"/>
</dbReference>
<dbReference type="Gene3D" id="1.20.5.170">
    <property type="match status" value="1"/>
</dbReference>
<dbReference type="Gene3D" id="2.40.50.140">
    <property type="entry name" value="Nucleic acid-binding proteins"/>
    <property type="match status" value="2"/>
</dbReference>
<dbReference type="Gene3D" id="3.40.50.300">
    <property type="entry name" value="P-loop containing nucleotide triphosphate hydrolases"/>
    <property type="match status" value="1"/>
</dbReference>
<dbReference type="HAMAP" id="MF_02112">
    <property type="entry name" value="ARC_ATPase"/>
    <property type="match status" value="1"/>
</dbReference>
<dbReference type="InterPro" id="IPR003593">
    <property type="entry name" value="AAA+_ATPase"/>
</dbReference>
<dbReference type="InterPro" id="IPR050168">
    <property type="entry name" value="AAA_ATPase_domain"/>
</dbReference>
<dbReference type="InterPro" id="IPR003959">
    <property type="entry name" value="ATPase_AAA_core"/>
</dbReference>
<dbReference type="InterPro" id="IPR003960">
    <property type="entry name" value="ATPase_AAA_CS"/>
</dbReference>
<dbReference type="InterPro" id="IPR012340">
    <property type="entry name" value="NA-bd_OB-fold"/>
</dbReference>
<dbReference type="InterPro" id="IPR027417">
    <property type="entry name" value="P-loop_NTPase"/>
</dbReference>
<dbReference type="InterPro" id="IPR032501">
    <property type="entry name" value="Prot_ATP_ID_OB_2nd"/>
</dbReference>
<dbReference type="InterPro" id="IPR041626">
    <property type="entry name" value="Prot_ATP_ID_OB_N"/>
</dbReference>
<dbReference type="InterPro" id="IPR022482">
    <property type="entry name" value="Proteasome_ATPase"/>
</dbReference>
<dbReference type="NCBIfam" id="TIGR03689">
    <property type="entry name" value="pup_AAA"/>
    <property type="match status" value="1"/>
</dbReference>
<dbReference type="PANTHER" id="PTHR23077">
    <property type="entry name" value="AAA-FAMILY ATPASE"/>
    <property type="match status" value="1"/>
</dbReference>
<dbReference type="PANTHER" id="PTHR23077:SF144">
    <property type="entry name" value="PROTEASOME-ASSOCIATED ATPASE"/>
    <property type="match status" value="1"/>
</dbReference>
<dbReference type="Pfam" id="PF00004">
    <property type="entry name" value="AAA"/>
    <property type="match status" value="1"/>
</dbReference>
<dbReference type="Pfam" id="PF16450">
    <property type="entry name" value="Prot_ATP_ID_OB_C"/>
    <property type="match status" value="1"/>
</dbReference>
<dbReference type="Pfam" id="PF17758">
    <property type="entry name" value="Prot_ATP_ID_OB_N"/>
    <property type="match status" value="1"/>
</dbReference>
<dbReference type="SMART" id="SM00382">
    <property type="entry name" value="AAA"/>
    <property type="match status" value="1"/>
</dbReference>
<dbReference type="SUPFAM" id="SSF52540">
    <property type="entry name" value="P-loop containing nucleoside triphosphate hydrolases"/>
    <property type="match status" value="1"/>
</dbReference>
<dbReference type="PROSITE" id="PS00674">
    <property type="entry name" value="AAA"/>
    <property type="match status" value="1"/>
</dbReference>
<evidence type="ECO:0000255" key="1">
    <source>
        <dbReference type="HAMAP-Rule" id="MF_02112"/>
    </source>
</evidence>
<evidence type="ECO:0000256" key="2">
    <source>
        <dbReference type="SAM" id="MobiDB-lite"/>
    </source>
</evidence>
<evidence type="ECO:0000305" key="3"/>
<accession>Q0RLU1</accession>
<proteinExistence type="inferred from homology"/>
<name>ARC_FRAAA</name>
<keyword id="KW-0067">ATP-binding</keyword>
<keyword id="KW-0143">Chaperone</keyword>
<keyword id="KW-0175">Coiled coil</keyword>
<keyword id="KW-0547">Nucleotide-binding</keyword>
<keyword id="KW-0647">Proteasome</keyword>
<keyword id="KW-1185">Reference proteome</keyword>
<feature type="chain" id="PRO_0000396982" description="Proteasome-associated ATPase">
    <location>
        <begin position="1"/>
        <end position="601"/>
    </location>
</feature>
<feature type="region of interest" description="Disordered" evidence="2">
    <location>
        <begin position="1"/>
        <end position="31"/>
    </location>
</feature>
<feature type="region of interest" description="Docks into pockets in the proteasome alpha-ring" evidence="1">
    <location>
        <begin position="600"/>
        <end position="601"/>
    </location>
</feature>
<feature type="coiled-coil region" evidence="1">
    <location>
        <begin position="18"/>
        <end position="106"/>
    </location>
</feature>
<feature type="compositionally biased region" description="Gly residues" evidence="2">
    <location>
        <begin position="1"/>
        <end position="15"/>
    </location>
</feature>
<feature type="compositionally biased region" description="Basic and acidic residues" evidence="2">
    <location>
        <begin position="18"/>
        <end position="31"/>
    </location>
</feature>
<feature type="binding site" evidence="1">
    <location>
        <begin position="289"/>
        <end position="294"/>
    </location>
    <ligand>
        <name>ATP</name>
        <dbReference type="ChEBI" id="CHEBI:30616"/>
    </ligand>
</feature>
<comment type="function">
    <text evidence="1">ATPase which is responsible for recognizing, binding, unfolding and translocation of pupylated proteins into the bacterial 20S proteasome core particle. May be essential for opening the gate of the 20S proteasome via an interaction with its C-terminus, thereby allowing substrate entry and access to the site of proteolysis. Thus, the C-termini of the proteasomal ATPase may function like a 'key in a lock' to induce gate opening and therefore regulate proteolysis.</text>
</comment>
<comment type="pathway">
    <text evidence="1">Protein degradation; proteasomal Pup-dependent pathway.</text>
</comment>
<comment type="subunit">
    <text evidence="1">Homohexamer. Assembles into a hexameric ring structure that caps the 20S proteasome core. Strongly interacts with the prokaryotic ubiquitin-like protein Pup through a hydrophobic interface; the interacting region of ARC lies in its N-terminal coiled-coil domain. There is one Pup binding site per ARC hexamer ring. Upon ATP-binding, the C-terminus of ARC interacts with the alpha-rings of the proteasome core, possibly by binding to the intersubunit pockets.</text>
</comment>
<comment type="domain">
    <text evidence="1">Consists of three main regions, an N-terminal coiled-coil domain that binds to protein Pup and functions as a docking station, an interdomain involved in ARC hexamerization, and a C-terminal ATPase domain of the AAA type.</text>
</comment>
<comment type="similarity">
    <text evidence="1">Belongs to the AAA ATPase family.</text>
</comment>
<comment type="sequence caution" evidence="3">
    <conflict type="erroneous initiation">
        <sequence resource="EMBL-CDS" id="CAJ61513"/>
    </conflict>
    <text>Truncated N-terminus.</text>
</comment>
<protein>
    <recommendedName>
        <fullName evidence="1">Proteasome-associated ATPase</fullName>
    </recommendedName>
    <alternativeName>
        <fullName evidence="1">AAA ATPase forming ring-shaped complexes</fullName>
        <shortName evidence="1">ARC</shortName>
    </alternativeName>
    <alternativeName>
        <fullName evidence="1">Proteasomal ATPase</fullName>
    </alternativeName>
</protein>
<reference key="1">
    <citation type="journal article" date="2007" name="Genome Res.">
        <title>Genome characteristics of facultatively symbiotic Frankia sp. strains reflect host range and host plant biogeography.</title>
        <authorList>
            <person name="Normand P."/>
            <person name="Lapierre P."/>
            <person name="Tisa L.S."/>
            <person name="Gogarten J.P."/>
            <person name="Alloisio N."/>
            <person name="Bagnarol E."/>
            <person name="Bassi C.A."/>
            <person name="Berry A.M."/>
            <person name="Bickhart D.M."/>
            <person name="Choisne N."/>
            <person name="Couloux A."/>
            <person name="Cournoyer B."/>
            <person name="Cruveiller S."/>
            <person name="Daubin V."/>
            <person name="Demange N."/>
            <person name="Francino M.P."/>
            <person name="Goltsman E."/>
            <person name="Huang Y."/>
            <person name="Kopp O.R."/>
            <person name="Labarre L."/>
            <person name="Lapidus A."/>
            <person name="Lavire C."/>
            <person name="Marechal J."/>
            <person name="Martinez M."/>
            <person name="Mastronunzio J.E."/>
            <person name="Mullin B.C."/>
            <person name="Niemann J."/>
            <person name="Pujic P."/>
            <person name="Rawnsley T."/>
            <person name="Rouy Z."/>
            <person name="Schenowitz C."/>
            <person name="Sellstedt A."/>
            <person name="Tavares F."/>
            <person name="Tomkins J.P."/>
            <person name="Vallenet D."/>
            <person name="Valverde C."/>
            <person name="Wall L.G."/>
            <person name="Wang Y."/>
            <person name="Medigue C."/>
            <person name="Benson D.R."/>
        </authorList>
    </citation>
    <scope>NUCLEOTIDE SEQUENCE [LARGE SCALE GENOMIC DNA]</scope>
    <source>
        <strain>DSM 45986 / CECT 9034 / ACN14a</strain>
    </source>
</reference>
<sequence length="601" mass="66490">MSGPRSGSGSGGSTGRPGDAESRRSAYEKEAHELTTQVAFLEEEVAMLRRRLSESPRQVRVLEERLAEVQAELSSATGQNDRLVATLREARDQIVTLKEEVDRLAQPPSGYGIFVSRYDDGTVDVFTQGRKLRVTVSPSVDVGSLSPGQEVMLNEALNVVEARSFERQGEIVLLKEVLESGDRALVIGHTDEERVVMLAQPLLDGPIRAGDSLLIEPRSGYAFERVPKSEVEELVLEEVPDIGYEQIGGLKSQIESIRDSVELPFLYKDLYREHQLKPPKGVLLYGPPGCGKTLIAKAVANSLAKKVEAITGQGNGRAFFLNIKGPELLNKFVGETERQIRLVFQRAREKASEGMPVIVFFDEMDSIFRTRGSGVSSDVENTIVPQLLSEIDGVEQLENVIVIGASNREDMIDPAILRPGRLDVKIKVERPDAEAARDIFAKYVVPSLPLYPEDLAEFDGNREATVAAMIQRVVERMYAESEENRFLEVTYANGDKEVLYFKDFNSGAMIENIVARAKKMAVKAHIEGGLKGLRMQYLLAACLDEFKENEDLPNTTNPDDWARISGKKGERIVYIRTLVTGTKGTEAGRSIDTIANTGQYL</sequence>